<reference key="1">
    <citation type="journal article" date="2005" name="Proc. Natl. Acad. Sci. U.S.A.">
        <title>The psychrophilic lifestyle as revealed by the genome sequence of Colwellia psychrerythraea 34H through genomic and proteomic analyses.</title>
        <authorList>
            <person name="Methe B.A."/>
            <person name="Nelson K.E."/>
            <person name="Deming J.W."/>
            <person name="Momen B."/>
            <person name="Melamud E."/>
            <person name="Zhang X."/>
            <person name="Moult J."/>
            <person name="Madupu R."/>
            <person name="Nelson W.C."/>
            <person name="Dodson R.J."/>
            <person name="Brinkac L.M."/>
            <person name="Daugherty S.C."/>
            <person name="Durkin A.S."/>
            <person name="DeBoy R.T."/>
            <person name="Kolonay J.F."/>
            <person name="Sullivan S.A."/>
            <person name="Zhou L."/>
            <person name="Davidsen T.M."/>
            <person name="Wu M."/>
            <person name="Huston A.L."/>
            <person name="Lewis M."/>
            <person name="Weaver B."/>
            <person name="Weidman J.F."/>
            <person name="Khouri H."/>
            <person name="Utterback T.R."/>
            <person name="Feldblyum T.V."/>
            <person name="Fraser C.M."/>
        </authorList>
    </citation>
    <scope>NUCLEOTIDE SEQUENCE [LARGE SCALE GENOMIC DNA]</scope>
    <source>
        <strain>34H / ATCC BAA-681</strain>
    </source>
</reference>
<proteinExistence type="inferred from homology"/>
<sequence>MAIERTFSIVKPDAVAKNFIGQIYNRFETAGLKIVASKMIHLSQEKAEGFYAEHSERPFFGALVEFMTSGPVMVQVLEGENAVLKNREIMGATNPAEALAGTIRADLADSIDENAAHGSDALESAAREIAYFFSDDEICARTR</sequence>
<comment type="function">
    <text evidence="1">Major role in the synthesis of nucleoside triphosphates other than ATP. The ATP gamma phosphate is transferred to the NDP beta phosphate via a ping-pong mechanism, using a phosphorylated active-site intermediate.</text>
</comment>
<comment type="catalytic activity">
    <reaction evidence="1">
        <text>a 2'-deoxyribonucleoside 5'-diphosphate + ATP = a 2'-deoxyribonucleoside 5'-triphosphate + ADP</text>
        <dbReference type="Rhea" id="RHEA:44640"/>
        <dbReference type="ChEBI" id="CHEBI:30616"/>
        <dbReference type="ChEBI" id="CHEBI:61560"/>
        <dbReference type="ChEBI" id="CHEBI:73316"/>
        <dbReference type="ChEBI" id="CHEBI:456216"/>
        <dbReference type="EC" id="2.7.4.6"/>
    </reaction>
</comment>
<comment type="catalytic activity">
    <reaction evidence="1">
        <text>a ribonucleoside 5'-diphosphate + ATP = a ribonucleoside 5'-triphosphate + ADP</text>
        <dbReference type="Rhea" id="RHEA:18113"/>
        <dbReference type="ChEBI" id="CHEBI:30616"/>
        <dbReference type="ChEBI" id="CHEBI:57930"/>
        <dbReference type="ChEBI" id="CHEBI:61557"/>
        <dbReference type="ChEBI" id="CHEBI:456216"/>
        <dbReference type="EC" id="2.7.4.6"/>
    </reaction>
</comment>
<comment type="cofactor">
    <cofactor evidence="1">
        <name>Mg(2+)</name>
        <dbReference type="ChEBI" id="CHEBI:18420"/>
    </cofactor>
</comment>
<comment type="subunit">
    <text evidence="1">Homotetramer.</text>
</comment>
<comment type="subcellular location">
    <subcellularLocation>
        <location evidence="1">Cytoplasm</location>
    </subcellularLocation>
</comment>
<comment type="similarity">
    <text evidence="1">Belongs to the NDK family.</text>
</comment>
<protein>
    <recommendedName>
        <fullName evidence="1">Nucleoside diphosphate kinase</fullName>
        <shortName evidence="1">NDK</shortName>
        <shortName evidence="1">NDP kinase</shortName>
        <ecNumber evidence="1">2.7.4.6</ecNumber>
    </recommendedName>
    <alternativeName>
        <fullName evidence="1">Nucleoside-2-P kinase</fullName>
    </alternativeName>
</protein>
<dbReference type="EC" id="2.7.4.6" evidence="1"/>
<dbReference type="EMBL" id="CP000083">
    <property type="protein sequence ID" value="AAZ23999.1"/>
    <property type="molecule type" value="Genomic_DNA"/>
</dbReference>
<dbReference type="RefSeq" id="WP_011044987.1">
    <property type="nucleotide sequence ID" value="NC_003910.7"/>
</dbReference>
<dbReference type="SMR" id="Q47WB6"/>
<dbReference type="STRING" id="167879.CPS_4256"/>
<dbReference type="KEGG" id="cps:CPS_4256"/>
<dbReference type="eggNOG" id="COG0105">
    <property type="taxonomic scope" value="Bacteria"/>
</dbReference>
<dbReference type="HOGENOM" id="CLU_060216_8_1_6"/>
<dbReference type="Proteomes" id="UP000000547">
    <property type="component" value="Chromosome"/>
</dbReference>
<dbReference type="GO" id="GO:0005737">
    <property type="term" value="C:cytoplasm"/>
    <property type="evidence" value="ECO:0007669"/>
    <property type="project" value="UniProtKB-SubCell"/>
</dbReference>
<dbReference type="GO" id="GO:0005524">
    <property type="term" value="F:ATP binding"/>
    <property type="evidence" value="ECO:0007669"/>
    <property type="project" value="UniProtKB-UniRule"/>
</dbReference>
<dbReference type="GO" id="GO:0046872">
    <property type="term" value="F:metal ion binding"/>
    <property type="evidence" value="ECO:0007669"/>
    <property type="project" value="UniProtKB-KW"/>
</dbReference>
<dbReference type="GO" id="GO:0004550">
    <property type="term" value="F:nucleoside diphosphate kinase activity"/>
    <property type="evidence" value="ECO:0007669"/>
    <property type="project" value="UniProtKB-UniRule"/>
</dbReference>
<dbReference type="GO" id="GO:0006241">
    <property type="term" value="P:CTP biosynthetic process"/>
    <property type="evidence" value="ECO:0007669"/>
    <property type="project" value="UniProtKB-UniRule"/>
</dbReference>
<dbReference type="GO" id="GO:0006183">
    <property type="term" value="P:GTP biosynthetic process"/>
    <property type="evidence" value="ECO:0007669"/>
    <property type="project" value="UniProtKB-UniRule"/>
</dbReference>
<dbReference type="GO" id="GO:0006228">
    <property type="term" value="P:UTP biosynthetic process"/>
    <property type="evidence" value="ECO:0007669"/>
    <property type="project" value="UniProtKB-UniRule"/>
</dbReference>
<dbReference type="CDD" id="cd04413">
    <property type="entry name" value="NDPk_I"/>
    <property type="match status" value="1"/>
</dbReference>
<dbReference type="FunFam" id="3.30.70.141:FF:000001">
    <property type="entry name" value="Nucleoside diphosphate kinase"/>
    <property type="match status" value="1"/>
</dbReference>
<dbReference type="Gene3D" id="3.30.70.141">
    <property type="entry name" value="Nucleoside diphosphate kinase-like domain"/>
    <property type="match status" value="1"/>
</dbReference>
<dbReference type="HAMAP" id="MF_00451">
    <property type="entry name" value="NDP_kinase"/>
    <property type="match status" value="1"/>
</dbReference>
<dbReference type="InterPro" id="IPR034907">
    <property type="entry name" value="NDK-like_dom"/>
</dbReference>
<dbReference type="InterPro" id="IPR036850">
    <property type="entry name" value="NDK-like_dom_sf"/>
</dbReference>
<dbReference type="InterPro" id="IPR001564">
    <property type="entry name" value="Nucleoside_diP_kinase"/>
</dbReference>
<dbReference type="InterPro" id="IPR023005">
    <property type="entry name" value="Nucleoside_diP_kinase_AS"/>
</dbReference>
<dbReference type="NCBIfam" id="NF001908">
    <property type="entry name" value="PRK00668.1"/>
    <property type="match status" value="1"/>
</dbReference>
<dbReference type="PANTHER" id="PTHR11349">
    <property type="entry name" value="NUCLEOSIDE DIPHOSPHATE KINASE"/>
    <property type="match status" value="1"/>
</dbReference>
<dbReference type="Pfam" id="PF00334">
    <property type="entry name" value="NDK"/>
    <property type="match status" value="1"/>
</dbReference>
<dbReference type="PRINTS" id="PR01243">
    <property type="entry name" value="NUCDPKINASE"/>
</dbReference>
<dbReference type="SMART" id="SM00562">
    <property type="entry name" value="NDK"/>
    <property type="match status" value="1"/>
</dbReference>
<dbReference type="SUPFAM" id="SSF54919">
    <property type="entry name" value="Nucleoside diphosphate kinase, NDK"/>
    <property type="match status" value="1"/>
</dbReference>
<dbReference type="PROSITE" id="PS00469">
    <property type="entry name" value="NDPK"/>
    <property type="match status" value="1"/>
</dbReference>
<dbReference type="PROSITE" id="PS51374">
    <property type="entry name" value="NDPK_LIKE"/>
    <property type="match status" value="1"/>
</dbReference>
<name>NDK_COLP3</name>
<feature type="chain" id="PRO_0000226555" description="Nucleoside diphosphate kinase">
    <location>
        <begin position="1"/>
        <end position="143"/>
    </location>
</feature>
<feature type="active site" description="Pros-phosphohistidine intermediate" evidence="1">
    <location>
        <position position="117"/>
    </location>
</feature>
<feature type="binding site" evidence="1">
    <location>
        <position position="11"/>
    </location>
    <ligand>
        <name>ATP</name>
        <dbReference type="ChEBI" id="CHEBI:30616"/>
    </ligand>
</feature>
<feature type="binding site" evidence="1">
    <location>
        <position position="59"/>
    </location>
    <ligand>
        <name>ATP</name>
        <dbReference type="ChEBI" id="CHEBI:30616"/>
    </ligand>
</feature>
<feature type="binding site" evidence="1">
    <location>
        <position position="87"/>
    </location>
    <ligand>
        <name>ATP</name>
        <dbReference type="ChEBI" id="CHEBI:30616"/>
    </ligand>
</feature>
<feature type="binding site" evidence="1">
    <location>
        <position position="93"/>
    </location>
    <ligand>
        <name>ATP</name>
        <dbReference type="ChEBI" id="CHEBI:30616"/>
    </ligand>
</feature>
<feature type="binding site" evidence="1">
    <location>
        <position position="104"/>
    </location>
    <ligand>
        <name>ATP</name>
        <dbReference type="ChEBI" id="CHEBI:30616"/>
    </ligand>
</feature>
<feature type="binding site" evidence="1">
    <location>
        <position position="114"/>
    </location>
    <ligand>
        <name>ATP</name>
        <dbReference type="ChEBI" id="CHEBI:30616"/>
    </ligand>
</feature>
<gene>
    <name evidence="1" type="primary">ndk</name>
    <name type="ordered locus">CPS_4256</name>
</gene>
<organism>
    <name type="scientific">Colwellia psychrerythraea (strain 34H / ATCC BAA-681)</name>
    <name type="common">Vibrio psychroerythus</name>
    <dbReference type="NCBI Taxonomy" id="167879"/>
    <lineage>
        <taxon>Bacteria</taxon>
        <taxon>Pseudomonadati</taxon>
        <taxon>Pseudomonadota</taxon>
        <taxon>Gammaproteobacteria</taxon>
        <taxon>Alteromonadales</taxon>
        <taxon>Colwelliaceae</taxon>
        <taxon>Colwellia</taxon>
    </lineage>
</organism>
<keyword id="KW-0067">ATP-binding</keyword>
<keyword id="KW-0963">Cytoplasm</keyword>
<keyword id="KW-0418">Kinase</keyword>
<keyword id="KW-0460">Magnesium</keyword>
<keyword id="KW-0479">Metal-binding</keyword>
<keyword id="KW-0546">Nucleotide metabolism</keyword>
<keyword id="KW-0547">Nucleotide-binding</keyword>
<keyword id="KW-0597">Phosphoprotein</keyword>
<keyword id="KW-0808">Transferase</keyword>
<evidence type="ECO:0000255" key="1">
    <source>
        <dbReference type="HAMAP-Rule" id="MF_00451"/>
    </source>
</evidence>
<accession>Q47WB6</accession>